<sequence>MFSRLSLFRRAALAPAPMRMSFRTIYQKTEDELPRRIVPKLATFYSANPNHEDRINRLERLLRKYIKLPSQNNNEAQQTKAPWISFDEYALIGGGTKLKPTQYTQLLYMLNKLHNIDPQLTNDEITSELSQYYKKSSMLSNNIKIKTLDEFGRSIAVGKRKSSTAKVFVVRGTGEILVNGRQLNDYFLKMKDRESIMYPLQVIESVGKYNIFATTSGGGPTGQAESIMHAIAKALVVFNPLLKSRLHKAGVLTRDYRHVERKKPGKKKARKMPTWVKR</sequence>
<proteinExistence type="evidence at protein level"/>
<organism>
    <name type="scientific">Saccharomyces cerevisiae (strain ATCC 204508 / S288c)</name>
    <name type="common">Baker's yeast</name>
    <dbReference type="NCBI Taxonomy" id="559292"/>
    <lineage>
        <taxon>Eukaryota</taxon>
        <taxon>Fungi</taxon>
        <taxon>Dikarya</taxon>
        <taxon>Ascomycota</taxon>
        <taxon>Saccharomycotina</taxon>
        <taxon>Saccharomycetes</taxon>
        <taxon>Saccharomycetales</taxon>
        <taxon>Saccharomycetaceae</taxon>
        <taxon>Saccharomyces</taxon>
    </lineage>
</organism>
<accession>P38120</accession>
<accession>D6VQE1</accession>
<gene>
    <name type="primary">MRPS9</name>
    <name type="ordered locus">YBR146W</name>
    <name type="ORF">YBR1123</name>
</gene>
<feature type="transit peptide" description="Mitochondrion" evidence="1">
    <location>
        <begin position="1"/>
        <end position="10"/>
    </location>
</feature>
<feature type="chain" id="PRO_0000030653" description="Small ribosomal subunit protein uS9m">
    <location>
        <begin position="11"/>
        <end position="278"/>
    </location>
</feature>
<feature type="region of interest" description="Disordered" evidence="2">
    <location>
        <begin position="259"/>
        <end position="278"/>
    </location>
</feature>
<feature type="strand" evidence="12">
    <location>
        <begin position="36"/>
        <end position="41"/>
    </location>
</feature>
<feature type="turn" evidence="12">
    <location>
        <begin position="42"/>
        <end position="45"/>
    </location>
</feature>
<feature type="strand" evidence="12">
    <location>
        <begin position="46"/>
        <end position="48"/>
    </location>
</feature>
<feature type="helix" evidence="12">
    <location>
        <begin position="49"/>
        <end position="64"/>
    </location>
</feature>
<feature type="turn" evidence="12">
    <location>
        <begin position="65"/>
        <end position="67"/>
    </location>
</feature>
<feature type="helix" evidence="12">
    <location>
        <begin position="86"/>
        <end position="92"/>
    </location>
</feature>
<feature type="helix" evidence="12">
    <location>
        <begin position="95"/>
        <end position="97"/>
    </location>
</feature>
<feature type="helix" evidence="12">
    <location>
        <begin position="100"/>
        <end position="114"/>
    </location>
</feature>
<feature type="turn" evidence="12">
    <location>
        <begin position="118"/>
        <end position="120"/>
    </location>
</feature>
<feature type="helix" evidence="12">
    <location>
        <begin position="123"/>
        <end position="130"/>
    </location>
</feature>
<feature type="strand" evidence="12">
    <location>
        <begin position="154"/>
        <end position="160"/>
    </location>
</feature>
<feature type="strand" evidence="12">
    <location>
        <begin position="163"/>
        <end position="174"/>
    </location>
</feature>
<feature type="strand" evidence="12">
    <location>
        <begin position="176"/>
        <end position="178"/>
    </location>
</feature>
<feature type="helix" evidence="12">
    <location>
        <begin position="183"/>
        <end position="186"/>
    </location>
</feature>
<feature type="helix" evidence="12">
    <location>
        <begin position="190"/>
        <end position="202"/>
    </location>
</feature>
<feature type="strand" evidence="12">
    <location>
        <begin position="208"/>
        <end position="218"/>
    </location>
</feature>
<feature type="helix" evidence="12">
    <location>
        <begin position="220"/>
        <end position="238"/>
    </location>
</feature>
<feature type="helix" evidence="12">
    <location>
        <begin position="240"/>
        <end position="242"/>
    </location>
</feature>
<feature type="helix" evidence="12">
    <location>
        <begin position="243"/>
        <end position="249"/>
    </location>
</feature>
<feature type="strand" evidence="12">
    <location>
        <begin position="251"/>
        <end position="253"/>
    </location>
</feature>
<comment type="function">
    <text evidence="10 11">Component of the mitochondrial ribosome (mitoribosome), a dedicated translation machinery responsible for the synthesis of mitochondrial genome-encoded proteins, including at least some of the essential transmembrane subunits of the mitochondrial respiratory chain. The mitoribosomes are attached to the mitochondrial inner membrane and translation products are cotranslationally integrated into the membrane.</text>
</comment>
<comment type="subunit">
    <text evidence="3 4 7">Component of the mitochondrial small ribosomal subunit (mt-SSU). Mature yeast 74S mitochondrial ribosomes consist of a small (37S) and a large (54S) subunit. The 37S small subunit contains a 15S ribosomal RNA (15S mt-rRNA) and 34 different proteins. The 54S large subunit contains a 21S rRNA (21S mt-rRNA) and 46 different proteins.</text>
</comment>
<comment type="subcellular location">
    <subcellularLocation>
        <location evidence="5">Mitochondrion</location>
    </subcellularLocation>
    <text evidence="6">Mitoribosomes are tethered to the mitochondrial inner membrane and spatially aligned with the membrane insertion machinery through two distinct membrane contact sites, formed by the 21S rRNA expansion segment 96-ES1 and the inner membrane protein MBA1.</text>
</comment>
<comment type="similarity">
    <text evidence="9">Belongs to the universal ribosomal protein uS9 family.</text>
</comment>
<reference key="1">
    <citation type="journal article" date="1995" name="Curr. Genet.">
        <title>Cloning and analysis of the nuclear gene MRP-S9 encoding mitochondrial ribosomal protein S9 of Saccharomyces cerevisiae.</title>
        <authorList>
            <person name="Koetter P."/>
            <person name="Entian K.-D."/>
        </authorList>
    </citation>
    <scope>NUCLEOTIDE SEQUENCE [GENOMIC DNA]</scope>
</reference>
<reference key="2">
    <citation type="journal article" date="1994" name="EMBO J.">
        <title>Complete DNA sequence of yeast chromosome II.</title>
        <authorList>
            <person name="Feldmann H."/>
            <person name="Aigle M."/>
            <person name="Aljinovic G."/>
            <person name="Andre B."/>
            <person name="Baclet M.C."/>
            <person name="Barthe C."/>
            <person name="Baur A."/>
            <person name="Becam A.-M."/>
            <person name="Biteau N."/>
            <person name="Boles E."/>
            <person name="Brandt T."/>
            <person name="Brendel M."/>
            <person name="Brueckner M."/>
            <person name="Bussereau F."/>
            <person name="Christiansen C."/>
            <person name="Contreras R."/>
            <person name="Crouzet M."/>
            <person name="Cziepluch C."/>
            <person name="Demolis N."/>
            <person name="Delaveau T."/>
            <person name="Doignon F."/>
            <person name="Domdey H."/>
            <person name="Duesterhus S."/>
            <person name="Dubois E."/>
            <person name="Dujon B."/>
            <person name="El Bakkoury M."/>
            <person name="Entian K.-D."/>
            <person name="Feuermann M."/>
            <person name="Fiers W."/>
            <person name="Fobo G.M."/>
            <person name="Fritz C."/>
            <person name="Gassenhuber J."/>
            <person name="Glansdorff N."/>
            <person name="Goffeau A."/>
            <person name="Grivell L.A."/>
            <person name="de Haan M."/>
            <person name="Hein C."/>
            <person name="Herbert C.J."/>
            <person name="Hollenberg C.P."/>
            <person name="Holmstroem K."/>
            <person name="Jacq C."/>
            <person name="Jacquet M."/>
            <person name="Jauniaux J.-C."/>
            <person name="Jonniaux J.-L."/>
            <person name="Kallesoee T."/>
            <person name="Kiesau P."/>
            <person name="Kirchrath L."/>
            <person name="Koetter P."/>
            <person name="Korol S."/>
            <person name="Liebl S."/>
            <person name="Logghe M."/>
            <person name="Lohan A.J.E."/>
            <person name="Louis E.J."/>
            <person name="Li Z.Y."/>
            <person name="Maat M.J."/>
            <person name="Mallet L."/>
            <person name="Mannhaupt G."/>
            <person name="Messenguy F."/>
            <person name="Miosga T."/>
            <person name="Molemans F."/>
            <person name="Mueller S."/>
            <person name="Nasr F."/>
            <person name="Obermaier B."/>
            <person name="Perea J."/>
            <person name="Pierard A."/>
            <person name="Piravandi E."/>
            <person name="Pohl F.M."/>
            <person name="Pohl T.M."/>
            <person name="Potier S."/>
            <person name="Proft M."/>
            <person name="Purnelle B."/>
            <person name="Ramezani Rad M."/>
            <person name="Rieger M."/>
            <person name="Rose M."/>
            <person name="Schaaff-Gerstenschlaeger I."/>
            <person name="Scherens B."/>
            <person name="Schwarzlose C."/>
            <person name="Skala J."/>
            <person name="Slonimski P.P."/>
            <person name="Smits P.H.M."/>
            <person name="Souciet J.-L."/>
            <person name="Steensma H.Y."/>
            <person name="Stucka R."/>
            <person name="Urrestarazu L.A."/>
            <person name="van der Aart Q.J.M."/>
            <person name="Van Dyck L."/>
            <person name="Vassarotti A."/>
            <person name="Vetter I."/>
            <person name="Vierendeels F."/>
            <person name="Vissers S."/>
            <person name="Wagner G."/>
            <person name="de Wergifosse P."/>
            <person name="Wolfe K.H."/>
            <person name="Zagulski M."/>
            <person name="Zimmermann F.K."/>
            <person name="Mewes H.-W."/>
            <person name="Kleine K."/>
        </authorList>
    </citation>
    <scope>NUCLEOTIDE SEQUENCE [LARGE SCALE GENOMIC DNA]</scope>
    <source>
        <strain>ATCC 204508 / S288c</strain>
    </source>
</reference>
<reference key="3">
    <citation type="journal article" date="2014" name="G3 (Bethesda)">
        <title>The reference genome sequence of Saccharomyces cerevisiae: Then and now.</title>
        <authorList>
            <person name="Engel S.R."/>
            <person name="Dietrich F.S."/>
            <person name="Fisk D.G."/>
            <person name="Binkley G."/>
            <person name="Balakrishnan R."/>
            <person name="Costanzo M.C."/>
            <person name="Dwight S.S."/>
            <person name="Hitz B.C."/>
            <person name="Karra K."/>
            <person name="Nash R.S."/>
            <person name="Weng S."/>
            <person name="Wong E.D."/>
            <person name="Lloyd P."/>
            <person name="Skrzypek M.S."/>
            <person name="Miyasato S.R."/>
            <person name="Simison M."/>
            <person name="Cherry J.M."/>
        </authorList>
    </citation>
    <scope>GENOME REANNOTATION</scope>
    <source>
        <strain>ATCC 204508 / S288c</strain>
    </source>
</reference>
<reference key="4">
    <citation type="journal article" date="2001" name="J. Biol. Chem.">
        <title>Identification of 12 new yeast mitochondrial ribosomal proteins including 6 that have no prokaryotic homologues.</title>
        <authorList>
            <person name="Saveanu C."/>
            <person name="Fromont-Racine M."/>
            <person name="Harington A."/>
            <person name="Ricard F."/>
            <person name="Namane A."/>
            <person name="Jacquier A."/>
        </authorList>
    </citation>
    <scope>IDENTIFICATION IN THE MITOCHONDRIAL RIBOSOMAL SMALL COMPLEX</scope>
    <scope>IDENTIFICATION BY MASS SPECTROMETRY</scope>
</reference>
<reference key="5">
    <citation type="journal article" date="2002" name="Eur. J. Biochem.">
        <title>Tag-mediated isolation of yeast mitochondrial ribosome and mass spectrometric identification of its new components.</title>
        <authorList>
            <person name="Gan X."/>
            <person name="Kitakawa M."/>
            <person name="Yoshino K."/>
            <person name="Oshiro N."/>
            <person name="Yonezawa K."/>
            <person name="Isono K."/>
        </authorList>
    </citation>
    <scope>IDENTIFICATION IN THE MITOCHONDRIAL RIBOSOMAL SMALL COMPLEX</scope>
    <scope>IDENTIFICATION BY MASS SPECTROMETRY</scope>
</reference>
<reference key="6">
    <citation type="journal article" date="2003" name="Proc. Natl. Acad. Sci. U.S.A.">
        <title>The proteome of Saccharomyces cerevisiae mitochondria.</title>
        <authorList>
            <person name="Sickmann A."/>
            <person name="Reinders J."/>
            <person name="Wagner Y."/>
            <person name="Joppich C."/>
            <person name="Zahedi R.P."/>
            <person name="Meyer H.E."/>
            <person name="Schoenfisch B."/>
            <person name="Perschil I."/>
            <person name="Chacinska A."/>
            <person name="Guiard B."/>
            <person name="Rehling P."/>
            <person name="Pfanner N."/>
            <person name="Meisinger C."/>
        </authorList>
    </citation>
    <scope>SUBCELLULAR LOCATION [LARGE SCALE ANALYSIS]</scope>
    <source>
        <strain>ATCC 76625 / YPH499</strain>
    </source>
</reference>
<reference key="7">
    <citation type="journal article" date="2015" name="Nat. Commun.">
        <title>Organization of the mitochondrial translation machinery studied in situ by cryoelectron tomography.</title>
        <authorList>
            <person name="Pfeffer S."/>
            <person name="Woellhaf M.W."/>
            <person name="Herrmann J.M."/>
            <person name="Forster F."/>
        </authorList>
    </citation>
    <scope>SUBCELLULAR LOCATION</scope>
</reference>
<reference key="8">
    <citation type="journal article" date="2017" name="Science">
        <title>The structure of the yeast mitochondrial ribosome.</title>
        <authorList>
            <person name="Desai N."/>
            <person name="Brown A."/>
            <person name="Amunts A."/>
            <person name="Ramakrishnan V."/>
        </authorList>
    </citation>
    <scope>STRUCTURE BY ELECTRON MICROSCOPY (3.25 ANGSTROMS)</scope>
    <scope>SUBUNIT</scope>
</reference>
<evidence type="ECO:0000255" key="1"/>
<evidence type="ECO:0000256" key="2">
    <source>
        <dbReference type="SAM" id="MobiDB-lite"/>
    </source>
</evidence>
<evidence type="ECO:0000269" key="3">
    <source>
    </source>
</evidence>
<evidence type="ECO:0000269" key="4">
    <source>
    </source>
</evidence>
<evidence type="ECO:0000269" key="5">
    <source>
    </source>
</evidence>
<evidence type="ECO:0000269" key="6">
    <source>
    </source>
</evidence>
<evidence type="ECO:0000269" key="7">
    <source>
    </source>
</evidence>
<evidence type="ECO:0000303" key="8">
    <source>
    </source>
</evidence>
<evidence type="ECO:0000305" key="9"/>
<evidence type="ECO:0000305" key="10">
    <source>
    </source>
</evidence>
<evidence type="ECO:0000305" key="11">
    <source>
    </source>
</evidence>
<evidence type="ECO:0007829" key="12">
    <source>
        <dbReference type="PDB" id="8D8L"/>
    </source>
</evidence>
<protein>
    <recommendedName>
        <fullName evidence="8">Small ribosomal subunit protein uS9m</fullName>
    </recommendedName>
    <alternativeName>
        <fullName>37S ribosomal protein S9, mitochondrial</fullName>
    </alternativeName>
</protein>
<name>RT09_YEAST</name>
<keyword id="KW-0002">3D-structure</keyword>
<keyword id="KW-0496">Mitochondrion</keyword>
<keyword id="KW-1185">Reference proteome</keyword>
<keyword id="KW-0687">Ribonucleoprotein</keyword>
<keyword id="KW-0689">Ribosomal protein</keyword>
<keyword id="KW-0809">Transit peptide</keyword>
<dbReference type="EMBL" id="Z36015">
    <property type="protein sequence ID" value="CAA85104.1"/>
    <property type="molecule type" value="Genomic_DNA"/>
</dbReference>
<dbReference type="EMBL" id="BK006936">
    <property type="protein sequence ID" value="DAA07261.1"/>
    <property type="molecule type" value="Genomic_DNA"/>
</dbReference>
<dbReference type="PIR" id="S46017">
    <property type="entry name" value="S46017"/>
</dbReference>
<dbReference type="RefSeq" id="NP_009704.1">
    <property type="nucleotide sequence ID" value="NM_001178494.1"/>
</dbReference>
<dbReference type="PDB" id="5MRC">
    <property type="method" value="EM"/>
    <property type="resolution" value="3.25 A"/>
    <property type="chains" value="II=35-278"/>
</dbReference>
<dbReference type="PDB" id="5MRE">
    <property type="method" value="EM"/>
    <property type="resolution" value="3.75 A"/>
    <property type="chains" value="II=35-278"/>
</dbReference>
<dbReference type="PDB" id="5MRF">
    <property type="method" value="EM"/>
    <property type="resolution" value="4.97 A"/>
    <property type="chains" value="II=35-278"/>
</dbReference>
<dbReference type="PDB" id="8D8K">
    <property type="method" value="EM"/>
    <property type="resolution" value="3.13 A"/>
    <property type="chains" value="I=1-278"/>
</dbReference>
<dbReference type="PDB" id="8D8L">
    <property type="method" value="EM"/>
    <property type="resolution" value="2.60 A"/>
    <property type="chains" value="I=1-278"/>
</dbReference>
<dbReference type="PDB" id="8OM2">
    <property type="method" value="EM"/>
    <property type="resolution" value="2.57 A"/>
    <property type="chains" value="I=1-278"/>
</dbReference>
<dbReference type="PDB" id="8OM3">
    <property type="method" value="EM"/>
    <property type="resolution" value="2.87 A"/>
    <property type="chains" value="I=1-278"/>
</dbReference>
<dbReference type="PDB" id="8OM4">
    <property type="method" value="EM"/>
    <property type="resolution" value="2.32 A"/>
    <property type="chains" value="I=1-278"/>
</dbReference>
<dbReference type="PDBsum" id="5MRC"/>
<dbReference type="PDBsum" id="5MRE"/>
<dbReference type="PDBsum" id="5MRF"/>
<dbReference type="PDBsum" id="8D8K"/>
<dbReference type="PDBsum" id="8D8L"/>
<dbReference type="PDBsum" id="8OM2"/>
<dbReference type="PDBsum" id="8OM3"/>
<dbReference type="PDBsum" id="8OM4"/>
<dbReference type="EMDB" id="EMD-16966"/>
<dbReference type="EMDB" id="EMD-16967"/>
<dbReference type="EMDB" id="EMD-16968"/>
<dbReference type="EMDB" id="EMD-27250"/>
<dbReference type="EMDB" id="EMD-27251"/>
<dbReference type="EMDB" id="EMD-3551"/>
<dbReference type="EMDB" id="EMD-3552"/>
<dbReference type="EMDB" id="EMD-3553"/>
<dbReference type="SMR" id="P38120"/>
<dbReference type="BioGRID" id="32845">
    <property type="interactions" value="83"/>
</dbReference>
<dbReference type="ComplexPortal" id="CPX-1603">
    <property type="entry name" value="37S mitochondrial small ribosomal subunit"/>
</dbReference>
<dbReference type="DIP" id="DIP-4924N"/>
<dbReference type="FunCoup" id="P38120">
    <property type="interactions" value="296"/>
</dbReference>
<dbReference type="IntAct" id="P38120">
    <property type="interactions" value="38"/>
</dbReference>
<dbReference type="MINT" id="P38120"/>
<dbReference type="STRING" id="4932.YBR146W"/>
<dbReference type="GlyGen" id="P38120">
    <property type="glycosylation" value="1 site"/>
</dbReference>
<dbReference type="PaxDb" id="4932-YBR146W"/>
<dbReference type="PeptideAtlas" id="P38120"/>
<dbReference type="EnsemblFungi" id="YBR146W_mRNA">
    <property type="protein sequence ID" value="YBR146W"/>
    <property type="gene ID" value="YBR146W"/>
</dbReference>
<dbReference type="GeneID" id="852443"/>
<dbReference type="KEGG" id="sce:YBR146W"/>
<dbReference type="AGR" id="SGD:S000000350"/>
<dbReference type="SGD" id="S000000350">
    <property type="gene designation" value="MRPS9"/>
</dbReference>
<dbReference type="VEuPathDB" id="FungiDB:YBR146W"/>
<dbReference type="eggNOG" id="KOG1697">
    <property type="taxonomic scope" value="Eukaryota"/>
</dbReference>
<dbReference type="GeneTree" id="ENSGT00390000011204"/>
<dbReference type="HOGENOM" id="CLU_036531_0_0_1"/>
<dbReference type="InParanoid" id="P38120"/>
<dbReference type="OMA" id="RESAMWA"/>
<dbReference type="OrthoDB" id="10254627at2759"/>
<dbReference type="BioCyc" id="YEAST:G3O-29098-MONOMER"/>
<dbReference type="BioGRID-ORCS" id="852443">
    <property type="hits" value="0 hits in 10 CRISPR screens"/>
</dbReference>
<dbReference type="PRO" id="PR:P38120"/>
<dbReference type="Proteomes" id="UP000002311">
    <property type="component" value="Chromosome II"/>
</dbReference>
<dbReference type="RNAct" id="P38120">
    <property type="molecule type" value="protein"/>
</dbReference>
<dbReference type="GO" id="GO:0005743">
    <property type="term" value="C:mitochondrial inner membrane"/>
    <property type="evidence" value="ECO:0000303"/>
    <property type="project" value="ComplexPortal"/>
</dbReference>
<dbReference type="GO" id="GO:0005763">
    <property type="term" value="C:mitochondrial small ribosomal subunit"/>
    <property type="evidence" value="ECO:0000314"/>
    <property type="project" value="SGD"/>
</dbReference>
<dbReference type="GO" id="GO:0005739">
    <property type="term" value="C:mitochondrion"/>
    <property type="evidence" value="ECO:0007005"/>
    <property type="project" value="SGD"/>
</dbReference>
<dbReference type="GO" id="GO:0003723">
    <property type="term" value="F:RNA binding"/>
    <property type="evidence" value="ECO:0000318"/>
    <property type="project" value="GO_Central"/>
</dbReference>
<dbReference type="GO" id="GO:0003735">
    <property type="term" value="F:structural constituent of ribosome"/>
    <property type="evidence" value="ECO:0000314"/>
    <property type="project" value="SGD"/>
</dbReference>
<dbReference type="GO" id="GO:0032543">
    <property type="term" value="P:mitochondrial translation"/>
    <property type="evidence" value="ECO:0000303"/>
    <property type="project" value="ComplexPortal"/>
</dbReference>
<dbReference type="FunFam" id="3.30.230.10:FF:000001">
    <property type="entry name" value="30S ribosomal protein S9"/>
    <property type="match status" value="1"/>
</dbReference>
<dbReference type="Gene3D" id="3.30.230.10">
    <property type="match status" value="1"/>
</dbReference>
<dbReference type="InterPro" id="IPR020568">
    <property type="entry name" value="Ribosomal_Su5_D2-typ_SF"/>
</dbReference>
<dbReference type="InterPro" id="IPR000754">
    <property type="entry name" value="Ribosomal_uS9"/>
</dbReference>
<dbReference type="InterPro" id="IPR023035">
    <property type="entry name" value="Ribosomal_uS9_bac/plastid"/>
</dbReference>
<dbReference type="InterPro" id="IPR020574">
    <property type="entry name" value="Ribosomal_uS9_CS"/>
</dbReference>
<dbReference type="InterPro" id="IPR014721">
    <property type="entry name" value="Ribsml_uS5_D2-typ_fold_subgr"/>
</dbReference>
<dbReference type="NCBIfam" id="NF001099">
    <property type="entry name" value="PRK00132.1"/>
    <property type="match status" value="1"/>
</dbReference>
<dbReference type="PANTHER" id="PTHR21569">
    <property type="entry name" value="RIBOSOMAL PROTEIN S9"/>
    <property type="match status" value="1"/>
</dbReference>
<dbReference type="PANTHER" id="PTHR21569:SF1">
    <property type="entry name" value="SMALL RIBOSOMAL SUBUNIT PROTEIN US9M"/>
    <property type="match status" value="1"/>
</dbReference>
<dbReference type="Pfam" id="PF00380">
    <property type="entry name" value="Ribosomal_S9"/>
    <property type="match status" value="1"/>
</dbReference>
<dbReference type="SUPFAM" id="SSF54211">
    <property type="entry name" value="Ribosomal protein S5 domain 2-like"/>
    <property type="match status" value="1"/>
</dbReference>
<dbReference type="PROSITE" id="PS00360">
    <property type="entry name" value="RIBOSOMAL_S9"/>
    <property type="match status" value="1"/>
</dbReference>